<sequence length="205" mass="23944">MLKLKFNEEGLIPVIAQDYRTGEVRMLAYANEEAIKKTLETGYAHYYSRSRKKIWKKGETSGELQKVIEVRVDCDEDALIYVIEQEKDRACHTGERNCFFRDIEGNKVEKPLPFEVLPRLQDVIREKIERKEENSYTAKLVSQGKERVFQKFGEEAVETLIALMKGEKEEVIYESADMLYTFLVSLSVSGIDIKEVMEELIRRFK</sequence>
<dbReference type="EC" id="3.5.4.19"/>
<dbReference type="EC" id="3.6.1.31"/>
<dbReference type="EMBL" id="AE000657">
    <property type="protein sequence ID" value="AAC07730.1"/>
    <property type="molecule type" value="Genomic_DNA"/>
</dbReference>
<dbReference type="PIR" id="H70468">
    <property type="entry name" value="H70468"/>
</dbReference>
<dbReference type="RefSeq" id="NP_214349.1">
    <property type="nucleotide sequence ID" value="NC_000918.1"/>
</dbReference>
<dbReference type="RefSeq" id="WP_010881285.1">
    <property type="nucleotide sequence ID" value="NC_000918.1"/>
</dbReference>
<dbReference type="SMR" id="O67780"/>
<dbReference type="FunCoup" id="O67780">
    <property type="interactions" value="252"/>
</dbReference>
<dbReference type="STRING" id="224324.aq_1968"/>
<dbReference type="EnsemblBacteria" id="AAC07730">
    <property type="protein sequence ID" value="AAC07730"/>
    <property type="gene ID" value="aq_1968"/>
</dbReference>
<dbReference type="KEGG" id="aae:aq_1968"/>
<dbReference type="PATRIC" id="fig|224324.8.peg.1519"/>
<dbReference type="eggNOG" id="COG0139">
    <property type="taxonomic scope" value="Bacteria"/>
</dbReference>
<dbReference type="eggNOG" id="COG0140">
    <property type="taxonomic scope" value="Bacteria"/>
</dbReference>
<dbReference type="HOGENOM" id="CLU_048577_3_1_0"/>
<dbReference type="InParanoid" id="O67780"/>
<dbReference type="OrthoDB" id="9795769at2"/>
<dbReference type="UniPathway" id="UPA00031">
    <property type="reaction ID" value="UER00007"/>
</dbReference>
<dbReference type="UniPathway" id="UPA00031">
    <property type="reaction ID" value="UER00008"/>
</dbReference>
<dbReference type="Proteomes" id="UP000000798">
    <property type="component" value="Chromosome"/>
</dbReference>
<dbReference type="GO" id="GO:0005737">
    <property type="term" value="C:cytoplasm"/>
    <property type="evidence" value="ECO:0007669"/>
    <property type="project" value="UniProtKB-SubCell"/>
</dbReference>
<dbReference type="GO" id="GO:0005524">
    <property type="term" value="F:ATP binding"/>
    <property type="evidence" value="ECO:0007669"/>
    <property type="project" value="UniProtKB-KW"/>
</dbReference>
<dbReference type="GO" id="GO:0004635">
    <property type="term" value="F:phosphoribosyl-AMP cyclohydrolase activity"/>
    <property type="evidence" value="ECO:0007669"/>
    <property type="project" value="UniProtKB-UniRule"/>
</dbReference>
<dbReference type="GO" id="GO:0004636">
    <property type="term" value="F:phosphoribosyl-ATP diphosphatase activity"/>
    <property type="evidence" value="ECO:0007669"/>
    <property type="project" value="UniProtKB-UniRule"/>
</dbReference>
<dbReference type="GO" id="GO:0000105">
    <property type="term" value="P:L-histidine biosynthetic process"/>
    <property type="evidence" value="ECO:0007669"/>
    <property type="project" value="UniProtKB-UniRule"/>
</dbReference>
<dbReference type="CDD" id="cd11534">
    <property type="entry name" value="NTP-PPase_HisIE_like"/>
    <property type="match status" value="1"/>
</dbReference>
<dbReference type="FunFam" id="3.10.20.810:FF:000001">
    <property type="entry name" value="Histidine biosynthesis bifunctional protein HisIE"/>
    <property type="match status" value="1"/>
</dbReference>
<dbReference type="Gene3D" id="1.10.287.1080">
    <property type="entry name" value="MazG-like"/>
    <property type="match status" value="1"/>
</dbReference>
<dbReference type="Gene3D" id="3.10.20.810">
    <property type="entry name" value="Phosphoribosyl-AMP cyclohydrolase"/>
    <property type="match status" value="1"/>
</dbReference>
<dbReference type="HAMAP" id="MF_01020">
    <property type="entry name" value="HisE"/>
    <property type="match status" value="1"/>
</dbReference>
<dbReference type="HAMAP" id="MF_01021">
    <property type="entry name" value="HisI"/>
    <property type="match status" value="1"/>
</dbReference>
<dbReference type="HAMAP" id="MF_01019">
    <property type="entry name" value="HisIE"/>
    <property type="match status" value="1"/>
</dbReference>
<dbReference type="InterPro" id="IPR023019">
    <property type="entry name" value="His_synth_HisIE"/>
</dbReference>
<dbReference type="InterPro" id="IPR008179">
    <property type="entry name" value="HisE"/>
</dbReference>
<dbReference type="InterPro" id="IPR026660">
    <property type="entry name" value="PRA-CH"/>
</dbReference>
<dbReference type="InterPro" id="IPR021130">
    <property type="entry name" value="PRib-ATP_PPHydrolase-like"/>
</dbReference>
<dbReference type="InterPro" id="IPR002496">
    <property type="entry name" value="PRib_AMP_CycHydrolase_dom"/>
</dbReference>
<dbReference type="InterPro" id="IPR038019">
    <property type="entry name" value="PRib_AMP_CycHydrolase_sf"/>
</dbReference>
<dbReference type="NCBIfam" id="TIGR03188">
    <property type="entry name" value="histidine_hisI"/>
    <property type="match status" value="1"/>
</dbReference>
<dbReference type="NCBIfam" id="NF000768">
    <property type="entry name" value="PRK00051.1"/>
    <property type="match status" value="1"/>
</dbReference>
<dbReference type="NCBIfam" id="NF002747">
    <property type="entry name" value="PRK02759.1"/>
    <property type="match status" value="1"/>
</dbReference>
<dbReference type="PANTHER" id="PTHR42945">
    <property type="entry name" value="HISTIDINE BIOSYNTHESIS BIFUNCTIONAL PROTEIN"/>
    <property type="match status" value="1"/>
</dbReference>
<dbReference type="PANTHER" id="PTHR42945:SF1">
    <property type="entry name" value="HISTIDINE BIOSYNTHESIS BIFUNCTIONAL PROTEIN HIS7"/>
    <property type="match status" value="1"/>
</dbReference>
<dbReference type="Pfam" id="PF01502">
    <property type="entry name" value="PRA-CH"/>
    <property type="match status" value="1"/>
</dbReference>
<dbReference type="Pfam" id="PF01503">
    <property type="entry name" value="PRA-PH"/>
    <property type="match status" value="1"/>
</dbReference>
<dbReference type="SUPFAM" id="SSF101386">
    <property type="entry name" value="all-alpha NTP pyrophosphatases"/>
    <property type="match status" value="1"/>
</dbReference>
<dbReference type="SUPFAM" id="SSF141734">
    <property type="entry name" value="HisI-like"/>
    <property type="match status" value="1"/>
</dbReference>
<proteinExistence type="inferred from homology"/>
<feature type="chain" id="PRO_0000136401" description="Histidine biosynthesis bifunctional protein HisIE">
    <location>
        <begin position="1"/>
        <end position="205"/>
    </location>
</feature>
<feature type="region of interest" description="Phosphoribosyl-AMP cyclohydrolase">
    <location>
        <begin position="1"/>
        <end position="116"/>
    </location>
</feature>
<feature type="region of interest" description="Phosphoribosyl-ATP pyrophosphohydrolase">
    <location>
        <begin position="117"/>
        <end position="205"/>
    </location>
</feature>
<accession>O67780</accession>
<protein>
    <recommendedName>
        <fullName>Histidine biosynthesis bifunctional protein HisIE</fullName>
    </recommendedName>
    <domain>
        <recommendedName>
            <fullName>Phosphoribosyl-AMP cyclohydrolase</fullName>
            <shortName>PRA-CH</shortName>
            <ecNumber>3.5.4.19</ecNumber>
        </recommendedName>
    </domain>
    <domain>
        <recommendedName>
            <fullName>Phosphoribosyl-ATP pyrophosphatase</fullName>
            <shortName>PRA-PH</shortName>
            <ecNumber>3.6.1.31</ecNumber>
        </recommendedName>
    </domain>
</protein>
<gene>
    <name type="primary">hisI</name>
    <name type="synonym">hisIE</name>
    <name type="ordered locus">aq_1968</name>
</gene>
<name>HIS2_AQUAE</name>
<comment type="catalytic activity">
    <reaction>
        <text>1-(5-phospho-beta-D-ribosyl)-ATP + H2O = 1-(5-phospho-beta-D-ribosyl)-5'-AMP + diphosphate + H(+)</text>
        <dbReference type="Rhea" id="RHEA:22828"/>
        <dbReference type="ChEBI" id="CHEBI:15377"/>
        <dbReference type="ChEBI" id="CHEBI:15378"/>
        <dbReference type="ChEBI" id="CHEBI:33019"/>
        <dbReference type="ChEBI" id="CHEBI:59457"/>
        <dbReference type="ChEBI" id="CHEBI:73183"/>
        <dbReference type="EC" id="3.6.1.31"/>
    </reaction>
</comment>
<comment type="catalytic activity">
    <reaction>
        <text>1-(5-phospho-beta-D-ribosyl)-5'-AMP + H2O = 1-(5-phospho-beta-D-ribosyl)-5-[(5-phospho-beta-D-ribosylamino)methylideneamino]imidazole-4-carboxamide</text>
        <dbReference type="Rhea" id="RHEA:20049"/>
        <dbReference type="ChEBI" id="CHEBI:15377"/>
        <dbReference type="ChEBI" id="CHEBI:58435"/>
        <dbReference type="ChEBI" id="CHEBI:59457"/>
        <dbReference type="EC" id="3.5.4.19"/>
    </reaction>
</comment>
<comment type="pathway">
    <text>Amino-acid biosynthesis; L-histidine biosynthesis; L-histidine from 5-phospho-alpha-D-ribose 1-diphosphate: step 2/9.</text>
</comment>
<comment type="pathway">
    <text>Amino-acid biosynthesis; L-histidine biosynthesis; L-histidine from 5-phospho-alpha-D-ribose 1-diphosphate: step 3/9.</text>
</comment>
<comment type="subcellular location">
    <subcellularLocation>
        <location evidence="1">Cytoplasm</location>
    </subcellularLocation>
</comment>
<comment type="similarity">
    <text evidence="2">In the N-terminal section; belongs to the PRA-CH family.</text>
</comment>
<comment type="similarity">
    <text evidence="2">In the C-terminal section; belongs to the PRA-PH family.</text>
</comment>
<organism>
    <name type="scientific">Aquifex aeolicus (strain VF5)</name>
    <dbReference type="NCBI Taxonomy" id="224324"/>
    <lineage>
        <taxon>Bacteria</taxon>
        <taxon>Pseudomonadati</taxon>
        <taxon>Aquificota</taxon>
        <taxon>Aquificia</taxon>
        <taxon>Aquificales</taxon>
        <taxon>Aquificaceae</taxon>
        <taxon>Aquifex</taxon>
    </lineage>
</organism>
<reference key="1">
    <citation type="journal article" date="1998" name="Nature">
        <title>The complete genome of the hyperthermophilic bacterium Aquifex aeolicus.</title>
        <authorList>
            <person name="Deckert G."/>
            <person name="Warren P.V."/>
            <person name="Gaasterland T."/>
            <person name="Young W.G."/>
            <person name="Lenox A.L."/>
            <person name="Graham D.E."/>
            <person name="Overbeek R."/>
            <person name="Snead M.A."/>
            <person name="Keller M."/>
            <person name="Aujay M."/>
            <person name="Huber R."/>
            <person name="Feldman R.A."/>
            <person name="Short J.M."/>
            <person name="Olsen G.J."/>
            <person name="Swanson R.V."/>
        </authorList>
    </citation>
    <scope>NUCLEOTIDE SEQUENCE [LARGE SCALE GENOMIC DNA]</scope>
    <source>
        <strain>VF5</strain>
    </source>
</reference>
<evidence type="ECO:0000250" key="1"/>
<evidence type="ECO:0000305" key="2"/>
<keyword id="KW-0028">Amino-acid biosynthesis</keyword>
<keyword id="KW-0067">ATP-binding</keyword>
<keyword id="KW-0963">Cytoplasm</keyword>
<keyword id="KW-0368">Histidine biosynthesis</keyword>
<keyword id="KW-0378">Hydrolase</keyword>
<keyword id="KW-0511">Multifunctional enzyme</keyword>
<keyword id="KW-0547">Nucleotide-binding</keyword>
<keyword id="KW-1185">Reference proteome</keyword>